<organism>
    <name type="scientific">Zea mays</name>
    <name type="common">Maize</name>
    <dbReference type="NCBI Taxonomy" id="4577"/>
    <lineage>
        <taxon>Eukaryota</taxon>
        <taxon>Viridiplantae</taxon>
        <taxon>Streptophyta</taxon>
        <taxon>Embryophyta</taxon>
        <taxon>Tracheophyta</taxon>
        <taxon>Spermatophyta</taxon>
        <taxon>Magnoliopsida</taxon>
        <taxon>Liliopsida</taxon>
        <taxon>Poales</taxon>
        <taxon>Poaceae</taxon>
        <taxon>PACMAD clade</taxon>
        <taxon>Panicoideae</taxon>
        <taxon>Andropogonodae</taxon>
        <taxon>Andropogoneae</taxon>
        <taxon>Tripsacinae</taxon>
        <taxon>Zea</taxon>
    </lineage>
</organism>
<evidence type="ECO:0000250" key="1"/>
<evidence type="ECO:0000256" key="2">
    <source>
        <dbReference type="SAM" id="MobiDB-lite"/>
    </source>
</evidence>
<evidence type="ECO:0000305" key="3"/>
<accession>B6SM63</accession>
<proteinExistence type="evidence at transcript level"/>
<protein>
    <recommendedName>
        <fullName>Ninja-family protein 5</fullName>
    </recommendedName>
</protein>
<feature type="chain" id="PRO_0000369623" description="Ninja-family protein 5">
    <location>
        <begin position="1"/>
        <end position="307"/>
    </location>
</feature>
<feature type="region of interest" description="Disordered" evidence="2">
    <location>
        <begin position="1"/>
        <end position="159"/>
    </location>
</feature>
<feature type="region of interest" description="Disordered" evidence="2">
    <location>
        <begin position="173"/>
        <end position="208"/>
    </location>
</feature>
<feature type="compositionally biased region" description="Gly residues" evidence="2">
    <location>
        <begin position="8"/>
        <end position="30"/>
    </location>
</feature>
<feature type="compositionally biased region" description="Polar residues" evidence="2">
    <location>
        <begin position="63"/>
        <end position="83"/>
    </location>
</feature>
<feature type="compositionally biased region" description="Polar residues" evidence="2">
    <location>
        <begin position="173"/>
        <end position="183"/>
    </location>
</feature>
<sequence>MASRDFLGGFGRDGGQAPVGGAGAAPGPGGESDEIELSLGLSLGGCFGAEPSQEGRSADPRLQRSSSVASICSLPAATTGTSCGAQDAGPGPAAAPPPDLLRTSSLPAEYMEDRLRRRAMQSQRRLEAKRKRLERRNSMSSGRPVPAAGGRDDGLEHTVPSGFQLRRSVALTTAGSPTPSRPQQGPADRRAAEATGPDGAACHDEPQPLPLRLRTLRSLTMRTASTGDLRSAMAEDMPMVSYKAEGPGGRKTDGFLYKYRKGEEVRIVCVCHGSFLTPAEFVEHAGGGEVPNPLRHIVVNPQQSVFL</sequence>
<comment type="subcellular location">
    <subcellularLocation>
        <location evidence="1">Nucleus</location>
    </subcellularLocation>
</comment>
<comment type="similarity">
    <text evidence="3">Belongs to the Ninja family.</text>
</comment>
<reference key="1">
    <citation type="journal article" date="2009" name="Plant Mol. Biol.">
        <title>Insights into corn genes derived from large-scale cDNA sequencing.</title>
        <authorList>
            <person name="Alexandrov N.N."/>
            <person name="Brover V.V."/>
            <person name="Freidin S."/>
            <person name="Troukhan M.E."/>
            <person name="Tatarinova T.V."/>
            <person name="Zhang H."/>
            <person name="Swaller T.J."/>
            <person name="Lu Y.-P."/>
            <person name="Bouck J."/>
            <person name="Flavell R.B."/>
            <person name="Feldmann K.A."/>
        </authorList>
    </citation>
    <scope>NUCLEOTIDE SEQUENCE [LARGE SCALE MRNA]</scope>
</reference>
<keyword id="KW-0539">Nucleus</keyword>
<keyword id="KW-1185">Reference proteome</keyword>
<dbReference type="EMBL" id="EU953828">
    <property type="protein sequence ID" value="ACG25946.1"/>
    <property type="molecule type" value="mRNA"/>
</dbReference>
<dbReference type="RefSeq" id="NP_001147185.1">
    <property type="nucleotide sequence ID" value="NM_001153713.1"/>
</dbReference>
<dbReference type="SMR" id="B6SM63"/>
<dbReference type="FunCoup" id="B6SM63">
    <property type="interactions" value="1255"/>
</dbReference>
<dbReference type="PaxDb" id="4577-GRMZM5G831577_P01"/>
<dbReference type="EnsemblPlants" id="Zm00001eb326900_T001">
    <property type="protein sequence ID" value="Zm00001eb326900_P001"/>
    <property type="gene ID" value="Zm00001eb326900"/>
</dbReference>
<dbReference type="GeneID" id="100280792"/>
<dbReference type="Gramene" id="Zm00001eb326900_T001">
    <property type="protein sequence ID" value="Zm00001eb326900_P001"/>
    <property type="gene ID" value="Zm00001eb326900"/>
</dbReference>
<dbReference type="KEGG" id="zma:100280792"/>
<dbReference type="eggNOG" id="ENOG502QW6K">
    <property type="taxonomic scope" value="Eukaryota"/>
</dbReference>
<dbReference type="HOGENOM" id="CLU_034695_0_0_1"/>
<dbReference type="InParanoid" id="B6SM63"/>
<dbReference type="OMA" id="MDEMPCV"/>
<dbReference type="OrthoDB" id="667358at2759"/>
<dbReference type="Proteomes" id="UP000007305">
    <property type="component" value="Chromosome 7"/>
</dbReference>
<dbReference type="ExpressionAtlas" id="B6SM63">
    <property type="expression patterns" value="baseline and differential"/>
</dbReference>
<dbReference type="GO" id="GO:0005634">
    <property type="term" value="C:nucleus"/>
    <property type="evidence" value="ECO:0000318"/>
    <property type="project" value="GO_Central"/>
</dbReference>
<dbReference type="GO" id="GO:0045892">
    <property type="term" value="P:negative regulation of DNA-templated transcription"/>
    <property type="evidence" value="ECO:0000318"/>
    <property type="project" value="GO_Central"/>
</dbReference>
<dbReference type="GO" id="GO:0007165">
    <property type="term" value="P:signal transduction"/>
    <property type="evidence" value="ECO:0007669"/>
    <property type="project" value="InterPro"/>
</dbReference>
<dbReference type="InterPro" id="IPR031307">
    <property type="entry name" value="Ninja_fam"/>
</dbReference>
<dbReference type="InterPro" id="IPR012463">
    <property type="entry name" value="Ninja_motif"/>
</dbReference>
<dbReference type="InterPro" id="IPR032310">
    <property type="entry name" value="NLS_NINJA_AFP-like"/>
</dbReference>
<dbReference type="InterPro" id="IPR032308">
    <property type="entry name" value="TDBD"/>
</dbReference>
<dbReference type="PANTHER" id="PTHR31413">
    <property type="entry name" value="AFP HOMOLOG 2"/>
    <property type="match status" value="1"/>
</dbReference>
<dbReference type="PANTHER" id="PTHR31413:SF31">
    <property type="entry name" value="NINJA-FAMILY PROTEIN AFP3"/>
    <property type="match status" value="1"/>
</dbReference>
<dbReference type="Pfam" id="PF07897">
    <property type="entry name" value="EAR"/>
    <property type="match status" value="1"/>
</dbReference>
<dbReference type="Pfam" id="PF16136">
    <property type="entry name" value="NLS_NINJA_AFP"/>
    <property type="match status" value="1"/>
</dbReference>
<dbReference type="Pfam" id="PF16135">
    <property type="entry name" value="TDBD"/>
    <property type="match status" value="1"/>
</dbReference>
<name>NNJA5_MAIZE</name>